<protein>
    <recommendedName>
        <fullName evidence="1">Exodeoxyribonuclease 7 large subunit</fullName>
        <ecNumber evidence="1">3.1.11.6</ecNumber>
    </recommendedName>
    <alternativeName>
        <fullName evidence="1">Exodeoxyribonuclease VII large subunit</fullName>
        <shortName evidence="1">Exonuclease VII large subunit</shortName>
    </alternativeName>
</protein>
<accession>A3Q4N2</accession>
<feature type="chain" id="PRO_0000303801" description="Exodeoxyribonuclease 7 large subunit">
    <location>
        <begin position="1"/>
        <end position="411"/>
    </location>
</feature>
<organism>
    <name type="scientific">Mycobacterium sp. (strain JLS)</name>
    <dbReference type="NCBI Taxonomy" id="164757"/>
    <lineage>
        <taxon>Bacteria</taxon>
        <taxon>Bacillati</taxon>
        <taxon>Actinomycetota</taxon>
        <taxon>Actinomycetes</taxon>
        <taxon>Mycobacteriales</taxon>
        <taxon>Mycobacteriaceae</taxon>
        <taxon>Mycobacterium</taxon>
    </lineage>
</organism>
<reference key="1">
    <citation type="submission" date="2007-02" db="EMBL/GenBank/DDBJ databases">
        <title>Complete sequence of Mycobacterium sp. JLS.</title>
        <authorList>
            <consortium name="US DOE Joint Genome Institute"/>
            <person name="Copeland A."/>
            <person name="Lucas S."/>
            <person name="Lapidus A."/>
            <person name="Barry K."/>
            <person name="Detter J.C."/>
            <person name="Glavina del Rio T."/>
            <person name="Hammon N."/>
            <person name="Israni S."/>
            <person name="Dalin E."/>
            <person name="Tice H."/>
            <person name="Pitluck S."/>
            <person name="Chain P."/>
            <person name="Malfatti S."/>
            <person name="Shin M."/>
            <person name="Vergez L."/>
            <person name="Schmutz J."/>
            <person name="Larimer F."/>
            <person name="Land M."/>
            <person name="Hauser L."/>
            <person name="Kyrpides N."/>
            <person name="Mikhailova N."/>
            <person name="Miller C.D."/>
            <person name="Anderson A.J."/>
            <person name="Sims R.C."/>
            <person name="Richardson P."/>
        </authorList>
    </citation>
    <scope>NUCLEOTIDE SEQUENCE [LARGE SCALE GENOMIC DNA]</scope>
    <source>
        <strain>JLS</strain>
    </source>
</reference>
<sequence length="411" mass="44724">MTTPADDQGKSPENPWPVRAVATRVAKYIDRLGMVWIEGQLTELKIRQTTAWMVLRDPAADMSLSVSCPRDLVANAPVPLSEGTQVIVLGKPQFYTRNGSFSLRISEIRAVGIGELLARIDRLRRLLDAEGLFDPRLKRPIPFLPGTIGLITGRASHAERDVMTVAANRWPAVRFAVRNPIVQGPNAVPQIVGALRELDRDPGVDVIVLARGGGSVEDLLPFSDETLCREIASCTTPVVSAVGHEPDNPLCDLVADLRAATPTDAAKRVVPDAAAEQAFVTDLRRRSARALRQWVHREQHHLDQLRSRPVLARPLQAIDARADEVHRAVAAARRDVRRMVTVESERVGHLSARLTALGPAATLARGYAVVQTMPDTNVLRTTADAPAGTRLRIRVADGAITAVSEGTDEAH</sequence>
<name>EX7L_MYCSJ</name>
<proteinExistence type="inferred from homology"/>
<gene>
    <name evidence="1" type="primary">xseA</name>
    <name type="ordered locus">Mjls_4338</name>
</gene>
<evidence type="ECO:0000255" key="1">
    <source>
        <dbReference type="HAMAP-Rule" id="MF_00378"/>
    </source>
</evidence>
<keyword id="KW-0963">Cytoplasm</keyword>
<keyword id="KW-0269">Exonuclease</keyword>
<keyword id="KW-0378">Hydrolase</keyword>
<keyword id="KW-0540">Nuclease</keyword>
<comment type="function">
    <text evidence="1">Bidirectionally degrades single-stranded DNA into large acid-insoluble oligonucleotides, which are then degraded further into small acid-soluble oligonucleotides.</text>
</comment>
<comment type="catalytic activity">
    <reaction evidence="1">
        <text>Exonucleolytic cleavage in either 5'- to 3'- or 3'- to 5'-direction to yield nucleoside 5'-phosphates.</text>
        <dbReference type="EC" id="3.1.11.6"/>
    </reaction>
</comment>
<comment type="subunit">
    <text evidence="1">Heterooligomer composed of large and small subunits.</text>
</comment>
<comment type="subcellular location">
    <subcellularLocation>
        <location evidence="1">Cytoplasm</location>
    </subcellularLocation>
</comment>
<comment type="similarity">
    <text evidence="1">Belongs to the XseA family.</text>
</comment>
<dbReference type="EC" id="3.1.11.6" evidence="1"/>
<dbReference type="EMBL" id="CP000580">
    <property type="protein sequence ID" value="ABO00110.1"/>
    <property type="molecule type" value="Genomic_DNA"/>
</dbReference>
<dbReference type="SMR" id="A3Q4N2"/>
<dbReference type="KEGG" id="mjl:Mjls_4338"/>
<dbReference type="HOGENOM" id="CLU_023625_2_1_11"/>
<dbReference type="BioCyc" id="MSP164757:G1G8C-4379-MONOMER"/>
<dbReference type="GO" id="GO:0005737">
    <property type="term" value="C:cytoplasm"/>
    <property type="evidence" value="ECO:0007669"/>
    <property type="project" value="UniProtKB-SubCell"/>
</dbReference>
<dbReference type="GO" id="GO:0009318">
    <property type="term" value="C:exodeoxyribonuclease VII complex"/>
    <property type="evidence" value="ECO:0007669"/>
    <property type="project" value="InterPro"/>
</dbReference>
<dbReference type="GO" id="GO:0008855">
    <property type="term" value="F:exodeoxyribonuclease VII activity"/>
    <property type="evidence" value="ECO:0007669"/>
    <property type="project" value="UniProtKB-UniRule"/>
</dbReference>
<dbReference type="GO" id="GO:0003676">
    <property type="term" value="F:nucleic acid binding"/>
    <property type="evidence" value="ECO:0007669"/>
    <property type="project" value="InterPro"/>
</dbReference>
<dbReference type="GO" id="GO:0006308">
    <property type="term" value="P:DNA catabolic process"/>
    <property type="evidence" value="ECO:0007669"/>
    <property type="project" value="UniProtKB-UniRule"/>
</dbReference>
<dbReference type="CDD" id="cd04489">
    <property type="entry name" value="ExoVII_LU_OBF"/>
    <property type="match status" value="1"/>
</dbReference>
<dbReference type="HAMAP" id="MF_00378">
    <property type="entry name" value="Exonuc_7_L"/>
    <property type="match status" value="1"/>
</dbReference>
<dbReference type="InterPro" id="IPR003753">
    <property type="entry name" value="Exonuc_VII_L"/>
</dbReference>
<dbReference type="InterPro" id="IPR020579">
    <property type="entry name" value="Exonuc_VII_lsu_C"/>
</dbReference>
<dbReference type="InterPro" id="IPR025824">
    <property type="entry name" value="OB-fold_nuc-bd_dom"/>
</dbReference>
<dbReference type="NCBIfam" id="TIGR00237">
    <property type="entry name" value="xseA"/>
    <property type="match status" value="1"/>
</dbReference>
<dbReference type="PANTHER" id="PTHR30008">
    <property type="entry name" value="EXODEOXYRIBONUCLEASE 7 LARGE SUBUNIT"/>
    <property type="match status" value="1"/>
</dbReference>
<dbReference type="PANTHER" id="PTHR30008:SF0">
    <property type="entry name" value="EXODEOXYRIBONUCLEASE 7 LARGE SUBUNIT"/>
    <property type="match status" value="1"/>
</dbReference>
<dbReference type="Pfam" id="PF02601">
    <property type="entry name" value="Exonuc_VII_L"/>
    <property type="match status" value="2"/>
</dbReference>
<dbReference type="Pfam" id="PF13742">
    <property type="entry name" value="tRNA_anti_2"/>
    <property type="match status" value="1"/>
</dbReference>